<reference key="1">
    <citation type="journal article" date="2004" name="Nat. Genet.">
        <title>Complete sequencing and characterization of 21,243 full-length human cDNAs.</title>
        <authorList>
            <person name="Ota T."/>
            <person name="Suzuki Y."/>
            <person name="Nishikawa T."/>
            <person name="Otsuki T."/>
            <person name="Sugiyama T."/>
            <person name="Irie R."/>
            <person name="Wakamatsu A."/>
            <person name="Hayashi K."/>
            <person name="Sato H."/>
            <person name="Nagai K."/>
            <person name="Kimura K."/>
            <person name="Makita H."/>
            <person name="Sekine M."/>
            <person name="Obayashi M."/>
            <person name="Nishi T."/>
            <person name="Shibahara T."/>
            <person name="Tanaka T."/>
            <person name="Ishii S."/>
            <person name="Yamamoto J."/>
            <person name="Saito K."/>
            <person name="Kawai Y."/>
            <person name="Isono Y."/>
            <person name="Nakamura Y."/>
            <person name="Nagahari K."/>
            <person name="Murakami K."/>
            <person name="Yasuda T."/>
            <person name="Iwayanagi T."/>
            <person name="Wagatsuma M."/>
            <person name="Shiratori A."/>
            <person name="Sudo H."/>
            <person name="Hosoiri T."/>
            <person name="Kaku Y."/>
            <person name="Kodaira H."/>
            <person name="Kondo H."/>
            <person name="Sugawara M."/>
            <person name="Takahashi M."/>
            <person name="Kanda K."/>
            <person name="Yokoi T."/>
            <person name="Furuya T."/>
            <person name="Kikkawa E."/>
            <person name="Omura Y."/>
            <person name="Abe K."/>
            <person name="Kamihara K."/>
            <person name="Katsuta N."/>
            <person name="Sato K."/>
            <person name="Tanikawa M."/>
            <person name="Yamazaki M."/>
            <person name="Ninomiya K."/>
            <person name="Ishibashi T."/>
            <person name="Yamashita H."/>
            <person name="Murakawa K."/>
            <person name="Fujimori K."/>
            <person name="Tanai H."/>
            <person name="Kimata M."/>
            <person name="Watanabe M."/>
            <person name="Hiraoka S."/>
            <person name="Chiba Y."/>
            <person name="Ishida S."/>
            <person name="Ono Y."/>
            <person name="Takiguchi S."/>
            <person name="Watanabe S."/>
            <person name="Yosida M."/>
            <person name="Hotuta T."/>
            <person name="Kusano J."/>
            <person name="Kanehori K."/>
            <person name="Takahashi-Fujii A."/>
            <person name="Hara H."/>
            <person name="Tanase T.-O."/>
            <person name="Nomura Y."/>
            <person name="Togiya S."/>
            <person name="Komai F."/>
            <person name="Hara R."/>
            <person name="Takeuchi K."/>
            <person name="Arita M."/>
            <person name="Imose N."/>
            <person name="Musashino K."/>
            <person name="Yuuki H."/>
            <person name="Oshima A."/>
            <person name="Sasaki N."/>
            <person name="Aotsuka S."/>
            <person name="Yoshikawa Y."/>
            <person name="Matsunawa H."/>
            <person name="Ichihara T."/>
            <person name="Shiohata N."/>
            <person name="Sano S."/>
            <person name="Moriya S."/>
            <person name="Momiyama H."/>
            <person name="Satoh N."/>
            <person name="Takami S."/>
            <person name="Terashima Y."/>
            <person name="Suzuki O."/>
            <person name="Nakagawa S."/>
            <person name="Senoh A."/>
            <person name="Mizoguchi H."/>
            <person name="Goto Y."/>
            <person name="Shimizu F."/>
            <person name="Wakebe H."/>
            <person name="Hishigaki H."/>
            <person name="Watanabe T."/>
            <person name="Sugiyama A."/>
            <person name="Takemoto M."/>
            <person name="Kawakami B."/>
            <person name="Yamazaki M."/>
            <person name="Watanabe K."/>
            <person name="Kumagai A."/>
            <person name="Itakura S."/>
            <person name="Fukuzumi Y."/>
            <person name="Fujimori Y."/>
            <person name="Komiyama M."/>
            <person name="Tashiro H."/>
            <person name="Tanigami A."/>
            <person name="Fujiwara T."/>
            <person name="Ono T."/>
            <person name="Yamada K."/>
            <person name="Fujii Y."/>
            <person name="Ozaki K."/>
            <person name="Hirao M."/>
            <person name="Ohmori Y."/>
            <person name="Kawabata A."/>
            <person name="Hikiji T."/>
            <person name="Kobatake N."/>
            <person name="Inagaki H."/>
            <person name="Ikema Y."/>
            <person name="Okamoto S."/>
            <person name="Okitani R."/>
            <person name="Kawakami T."/>
            <person name="Noguchi S."/>
            <person name="Itoh T."/>
            <person name="Shigeta K."/>
            <person name="Senba T."/>
            <person name="Matsumura K."/>
            <person name="Nakajima Y."/>
            <person name="Mizuno T."/>
            <person name="Morinaga M."/>
            <person name="Sasaki M."/>
            <person name="Togashi T."/>
            <person name="Oyama M."/>
            <person name="Hata H."/>
            <person name="Watanabe M."/>
            <person name="Komatsu T."/>
            <person name="Mizushima-Sugano J."/>
            <person name="Satoh T."/>
            <person name="Shirai Y."/>
            <person name="Takahashi Y."/>
            <person name="Nakagawa K."/>
            <person name="Okumura K."/>
            <person name="Nagase T."/>
            <person name="Nomura N."/>
            <person name="Kikuchi H."/>
            <person name="Masuho Y."/>
            <person name="Yamashita R."/>
            <person name="Nakai K."/>
            <person name="Yada T."/>
            <person name="Nakamura Y."/>
            <person name="Ohara O."/>
            <person name="Isogai T."/>
            <person name="Sugano S."/>
        </authorList>
    </citation>
    <scope>NUCLEOTIDE SEQUENCE [LARGE SCALE MRNA]</scope>
    <source>
        <tissue>Heart</tissue>
    </source>
</reference>
<organism>
    <name type="scientific">Homo sapiens</name>
    <name type="common">Human</name>
    <dbReference type="NCBI Taxonomy" id="9606"/>
    <lineage>
        <taxon>Eukaryota</taxon>
        <taxon>Metazoa</taxon>
        <taxon>Chordata</taxon>
        <taxon>Craniata</taxon>
        <taxon>Vertebrata</taxon>
        <taxon>Euteleostomi</taxon>
        <taxon>Mammalia</taxon>
        <taxon>Eutheria</taxon>
        <taxon>Euarchontoglires</taxon>
        <taxon>Primates</taxon>
        <taxon>Haplorrhini</taxon>
        <taxon>Catarrhini</taxon>
        <taxon>Hominidae</taxon>
        <taxon>Homo</taxon>
    </lineage>
</organism>
<comment type="caution">
    <text evidence="2">Product of a dubious CDS prediction.</text>
</comment>
<proteinExistence type="uncertain"/>
<sequence>MPRAGRAPAEGGPAPGTRSSRCLRPRPLAWRRLVPNFGAWAPRKGAARVGRPVLSPRTSGAAGEPTCGAGSPGTLEEGVASGRTRRRTQSAGEVAKCRWGLGQEPLCPRGAVLLNSFSPPAWPQFPPALRLRALAWPQPRGPACGSTAQWPPRGDPTWRIS</sequence>
<dbReference type="EMBL" id="AK095915">
    <property type="protein sequence ID" value="BAC04647.1"/>
    <property type="molecule type" value="mRNA"/>
</dbReference>
<dbReference type="RefSeq" id="NP_001034994.1">
    <property type="nucleotide sequence ID" value="NM_001039905.2"/>
</dbReference>
<dbReference type="GlyGen" id="Q8N910">
    <property type="glycosylation" value="1 site, 1 O-linked glycan (1 site)"/>
</dbReference>
<dbReference type="BioMuta" id="HGNC:33868"/>
<dbReference type="PaxDb" id="9606-ENSP00000315794"/>
<dbReference type="AGR" id="HGNC:33868"/>
<dbReference type="GeneCards" id="PAK6-AS1"/>
<dbReference type="HGNC" id="HGNC:33868">
    <property type="gene designation" value="PAK6-AS1"/>
</dbReference>
<dbReference type="neXtProt" id="NX_Q8N910"/>
<dbReference type="eggNOG" id="ENOG502TFE9">
    <property type="taxonomic scope" value="Eukaryota"/>
</dbReference>
<dbReference type="InParanoid" id="Q8N910"/>
<dbReference type="PAN-GO" id="Q8N910">
    <property type="GO annotations" value="0 GO annotations based on evolutionary models"/>
</dbReference>
<dbReference type="PhylomeDB" id="Q8N910"/>
<dbReference type="TreeFam" id="TF342135"/>
<dbReference type="PathwayCommons" id="Q8N910"/>
<dbReference type="SignaLink" id="Q8N910"/>
<dbReference type="BioGRID-ORCS" id="644809">
    <property type="hits" value="12 hits in 1108 CRISPR screens"/>
</dbReference>
<dbReference type="GenomeRNAi" id="644809"/>
<dbReference type="Pharos" id="Q8N910">
    <property type="development level" value="Tdark"/>
</dbReference>
<dbReference type="Proteomes" id="UP000005640">
    <property type="component" value="Unplaced"/>
</dbReference>
<dbReference type="RNAct" id="Q8N910">
    <property type="molecule type" value="protein"/>
</dbReference>
<keyword id="KW-1185">Reference proteome</keyword>
<evidence type="ECO:0000256" key="1">
    <source>
        <dbReference type="SAM" id="MobiDB-lite"/>
    </source>
</evidence>
<evidence type="ECO:0000305" key="2"/>
<evidence type="ECO:0000312" key="3">
    <source>
        <dbReference type="HGNC" id="HGNC:33868"/>
    </source>
</evidence>
<feature type="chain" id="PRO_0000317190" description="Putative uncharacterized protein PAK6-AS1">
    <location>
        <begin position="1"/>
        <end position="161"/>
    </location>
</feature>
<feature type="region of interest" description="Disordered" evidence="1">
    <location>
        <begin position="1"/>
        <end position="23"/>
    </location>
</feature>
<feature type="region of interest" description="Disordered" evidence="1">
    <location>
        <begin position="50"/>
        <end position="91"/>
    </location>
</feature>
<feature type="region of interest" description="Disordered" evidence="1">
    <location>
        <begin position="140"/>
        <end position="161"/>
    </location>
</feature>
<feature type="compositionally biased region" description="Low complexity" evidence="1">
    <location>
        <begin position="1"/>
        <end position="16"/>
    </location>
</feature>
<feature type="sequence variant" id="VAR_061614" description="In dbSNP:rs55863440.">
    <original>P</original>
    <variation>S</variation>
    <location>
        <position position="119"/>
    </location>
</feature>
<feature type="sequence variant" id="VAR_061615" description="In dbSNP:rs55974545.">
    <original>P</original>
    <variation>R</variation>
    <location>
        <position position="151"/>
    </location>
</feature>
<feature type="sequence variant" id="VAR_061616" description="In dbSNP:rs55799438.">
    <original>I</original>
    <variation>T</variation>
    <location>
        <position position="160"/>
    </location>
</feature>
<gene>
    <name evidence="3" type="primary">PAK6-AS1</name>
    <name evidence="3" type="synonym">C15orf56</name>
</gene>
<protein>
    <recommendedName>
        <fullName evidence="2">Putative uncharacterized protein PAK6-AS1</fullName>
    </recommendedName>
    <alternativeName>
        <fullName evidence="3">PAK6 antisense RNA 1</fullName>
    </alternativeName>
</protein>
<accession>Q8N910</accession>
<name>CO056_HUMAN</name>